<gene>
    <name evidence="1" type="primary">atpA</name>
    <name type="ordered locus">A1I_07470</name>
</gene>
<reference key="1">
    <citation type="submission" date="2007-09" db="EMBL/GenBank/DDBJ databases">
        <title>Complete genome sequencing of Rickettsia bellii.</title>
        <authorList>
            <person name="Madan A."/>
            <person name="Lee H."/>
            <person name="Madan A."/>
            <person name="Yoon J.-G."/>
            <person name="Ryu G.-Y."/>
            <person name="Dasch G."/>
            <person name="Ereemeva M."/>
        </authorList>
    </citation>
    <scope>NUCLEOTIDE SEQUENCE [LARGE SCALE GENOMIC DNA]</scope>
    <source>
        <strain>OSU 85-389</strain>
    </source>
</reference>
<accession>A8GY42</accession>
<name>ATPA_RICB8</name>
<feature type="chain" id="PRO_1000055077" description="ATP synthase subunit alpha">
    <location>
        <begin position="1"/>
        <end position="512"/>
    </location>
</feature>
<feature type="binding site" evidence="1">
    <location>
        <begin position="169"/>
        <end position="176"/>
    </location>
    <ligand>
        <name>ATP</name>
        <dbReference type="ChEBI" id="CHEBI:30616"/>
    </ligand>
</feature>
<feature type="site" description="Required for activity" evidence="1">
    <location>
        <position position="370"/>
    </location>
</feature>
<keyword id="KW-0066">ATP synthesis</keyword>
<keyword id="KW-0067">ATP-binding</keyword>
<keyword id="KW-0997">Cell inner membrane</keyword>
<keyword id="KW-1003">Cell membrane</keyword>
<keyword id="KW-0139">CF(1)</keyword>
<keyword id="KW-0375">Hydrogen ion transport</keyword>
<keyword id="KW-0406">Ion transport</keyword>
<keyword id="KW-0472">Membrane</keyword>
<keyword id="KW-0547">Nucleotide-binding</keyword>
<keyword id="KW-1278">Translocase</keyword>
<keyword id="KW-0813">Transport</keyword>
<comment type="function">
    <text evidence="1">Produces ATP from ADP in the presence of a proton gradient across the membrane. The alpha chain is a regulatory subunit.</text>
</comment>
<comment type="catalytic activity">
    <reaction evidence="1">
        <text>ATP + H2O + 4 H(+)(in) = ADP + phosphate + 5 H(+)(out)</text>
        <dbReference type="Rhea" id="RHEA:57720"/>
        <dbReference type="ChEBI" id="CHEBI:15377"/>
        <dbReference type="ChEBI" id="CHEBI:15378"/>
        <dbReference type="ChEBI" id="CHEBI:30616"/>
        <dbReference type="ChEBI" id="CHEBI:43474"/>
        <dbReference type="ChEBI" id="CHEBI:456216"/>
        <dbReference type="EC" id="7.1.2.2"/>
    </reaction>
</comment>
<comment type="subunit">
    <text evidence="1">F-type ATPases have 2 components, CF(1) - the catalytic core - and CF(0) - the membrane proton channel. CF(1) has five subunits: alpha(3), beta(3), gamma(1), delta(1), epsilon(1). CF(0) has three main subunits: a(1), b(2) and c(9-12). The alpha and beta chains form an alternating ring which encloses part of the gamma chain. CF(1) is attached to CF(0) by a central stalk formed by the gamma and epsilon chains, while a peripheral stalk is formed by the delta and b chains.</text>
</comment>
<comment type="subcellular location">
    <subcellularLocation>
        <location evidence="1">Cell inner membrane</location>
        <topology evidence="1">Peripheral membrane protein</topology>
    </subcellularLocation>
</comment>
<comment type="similarity">
    <text evidence="1">Belongs to the ATPase alpha/beta chains family.</text>
</comment>
<proteinExistence type="inferred from homology"/>
<dbReference type="EC" id="7.1.2.2" evidence="1"/>
<dbReference type="EMBL" id="CP000849">
    <property type="protein sequence ID" value="ABV79792.1"/>
    <property type="molecule type" value="Genomic_DNA"/>
</dbReference>
<dbReference type="RefSeq" id="WP_012152258.1">
    <property type="nucleotide sequence ID" value="NC_009883.1"/>
</dbReference>
<dbReference type="SMR" id="A8GY42"/>
<dbReference type="KEGG" id="rbo:A1I_07470"/>
<dbReference type="HOGENOM" id="CLU_010091_2_1_5"/>
<dbReference type="GO" id="GO:0005886">
    <property type="term" value="C:plasma membrane"/>
    <property type="evidence" value="ECO:0007669"/>
    <property type="project" value="UniProtKB-SubCell"/>
</dbReference>
<dbReference type="GO" id="GO:0045259">
    <property type="term" value="C:proton-transporting ATP synthase complex"/>
    <property type="evidence" value="ECO:0007669"/>
    <property type="project" value="UniProtKB-KW"/>
</dbReference>
<dbReference type="GO" id="GO:0043531">
    <property type="term" value="F:ADP binding"/>
    <property type="evidence" value="ECO:0007669"/>
    <property type="project" value="TreeGrafter"/>
</dbReference>
<dbReference type="GO" id="GO:0005524">
    <property type="term" value="F:ATP binding"/>
    <property type="evidence" value="ECO:0007669"/>
    <property type="project" value="UniProtKB-UniRule"/>
</dbReference>
<dbReference type="GO" id="GO:0046933">
    <property type="term" value="F:proton-transporting ATP synthase activity, rotational mechanism"/>
    <property type="evidence" value="ECO:0007669"/>
    <property type="project" value="UniProtKB-UniRule"/>
</dbReference>
<dbReference type="CDD" id="cd18113">
    <property type="entry name" value="ATP-synt_F1_alpha_C"/>
    <property type="match status" value="1"/>
</dbReference>
<dbReference type="CDD" id="cd18116">
    <property type="entry name" value="ATP-synt_F1_alpha_N"/>
    <property type="match status" value="1"/>
</dbReference>
<dbReference type="CDD" id="cd01132">
    <property type="entry name" value="F1-ATPase_alpha_CD"/>
    <property type="match status" value="1"/>
</dbReference>
<dbReference type="FunFam" id="1.20.150.20:FF:000001">
    <property type="entry name" value="ATP synthase subunit alpha"/>
    <property type="match status" value="1"/>
</dbReference>
<dbReference type="FunFam" id="2.40.30.20:FF:000001">
    <property type="entry name" value="ATP synthase subunit alpha"/>
    <property type="match status" value="1"/>
</dbReference>
<dbReference type="FunFam" id="3.40.50.300:FF:002432">
    <property type="entry name" value="ATP synthase subunit alpha, mitochondrial"/>
    <property type="match status" value="1"/>
</dbReference>
<dbReference type="Gene3D" id="2.40.30.20">
    <property type="match status" value="1"/>
</dbReference>
<dbReference type="Gene3D" id="1.20.150.20">
    <property type="entry name" value="ATP synthase alpha/beta chain, C-terminal domain"/>
    <property type="match status" value="1"/>
</dbReference>
<dbReference type="Gene3D" id="3.40.50.300">
    <property type="entry name" value="P-loop containing nucleotide triphosphate hydrolases"/>
    <property type="match status" value="1"/>
</dbReference>
<dbReference type="HAMAP" id="MF_01346">
    <property type="entry name" value="ATP_synth_alpha_bact"/>
    <property type="match status" value="1"/>
</dbReference>
<dbReference type="InterPro" id="IPR023366">
    <property type="entry name" value="ATP_synth_asu-like_sf"/>
</dbReference>
<dbReference type="InterPro" id="IPR000793">
    <property type="entry name" value="ATP_synth_asu_C"/>
</dbReference>
<dbReference type="InterPro" id="IPR038376">
    <property type="entry name" value="ATP_synth_asu_C_sf"/>
</dbReference>
<dbReference type="InterPro" id="IPR033732">
    <property type="entry name" value="ATP_synth_F1_a_nt-bd_dom"/>
</dbReference>
<dbReference type="InterPro" id="IPR005294">
    <property type="entry name" value="ATP_synth_F1_asu"/>
</dbReference>
<dbReference type="InterPro" id="IPR020003">
    <property type="entry name" value="ATPase_a/bsu_AS"/>
</dbReference>
<dbReference type="InterPro" id="IPR004100">
    <property type="entry name" value="ATPase_F1/V1/A1_a/bsu_N"/>
</dbReference>
<dbReference type="InterPro" id="IPR036121">
    <property type="entry name" value="ATPase_F1/V1/A1_a/bsu_N_sf"/>
</dbReference>
<dbReference type="InterPro" id="IPR000194">
    <property type="entry name" value="ATPase_F1/V1/A1_a/bsu_nucl-bd"/>
</dbReference>
<dbReference type="InterPro" id="IPR027417">
    <property type="entry name" value="P-loop_NTPase"/>
</dbReference>
<dbReference type="NCBIfam" id="TIGR00962">
    <property type="entry name" value="atpA"/>
    <property type="match status" value="1"/>
</dbReference>
<dbReference type="NCBIfam" id="NF009884">
    <property type="entry name" value="PRK13343.1"/>
    <property type="match status" value="1"/>
</dbReference>
<dbReference type="PANTHER" id="PTHR48082">
    <property type="entry name" value="ATP SYNTHASE SUBUNIT ALPHA, MITOCHONDRIAL"/>
    <property type="match status" value="1"/>
</dbReference>
<dbReference type="PANTHER" id="PTHR48082:SF2">
    <property type="entry name" value="ATP SYNTHASE SUBUNIT ALPHA, MITOCHONDRIAL"/>
    <property type="match status" value="1"/>
</dbReference>
<dbReference type="Pfam" id="PF00006">
    <property type="entry name" value="ATP-synt_ab"/>
    <property type="match status" value="1"/>
</dbReference>
<dbReference type="Pfam" id="PF00306">
    <property type="entry name" value="ATP-synt_ab_C"/>
    <property type="match status" value="1"/>
</dbReference>
<dbReference type="Pfam" id="PF02874">
    <property type="entry name" value="ATP-synt_ab_N"/>
    <property type="match status" value="1"/>
</dbReference>
<dbReference type="PIRSF" id="PIRSF039088">
    <property type="entry name" value="F_ATPase_subunit_alpha"/>
    <property type="match status" value="1"/>
</dbReference>
<dbReference type="SUPFAM" id="SSF47917">
    <property type="entry name" value="C-terminal domain of alpha and beta subunits of F1 ATP synthase"/>
    <property type="match status" value="1"/>
</dbReference>
<dbReference type="SUPFAM" id="SSF50615">
    <property type="entry name" value="N-terminal domain of alpha and beta subunits of F1 ATP synthase"/>
    <property type="match status" value="1"/>
</dbReference>
<dbReference type="SUPFAM" id="SSF52540">
    <property type="entry name" value="P-loop containing nucleoside triphosphate hydrolases"/>
    <property type="match status" value="1"/>
</dbReference>
<dbReference type="PROSITE" id="PS00152">
    <property type="entry name" value="ATPASE_ALPHA_BETA"/>
    <property type="match status" value="1"/>
</dbReference>
<sequence length="512" mass="56423">MKLKPIEVADILQKEIANINCLSELEEVGQVINVGDGIAKIYGLANVQSGEVVEFESGVKGLVLNLENDSVDAVIMGDDNQVQQGDKVKRTKEVLEVLVGTALLGRVVDALGNPIDGKGDIKSKEYRHIEMKAPGIIDRASVSEPVQTGIKVIDLLIPIGRGQRELIIGDRQTGKTAIAIDTIINQKKAHSLNDEKDKIYCIYVAIGQKRSSVAQIVKKLEDAGAMDYTIIVSATASEAAALQFVAPYAACSMGEYFRDNGKHALIIYDDLSKHAVAYRQISLLLRRPPGREAYPGDVFYLHSRLLECAAKMSEEKGGGSLTALPIIETQAGDVSAYIPTNVISITDGQIFLESELFYKGIRPAVNVGISVSRVGSAAQIKAMKQVAGSIKLELAQFRELESFLQFGSDLDSATKAQIEHGKRLVEILKQAQYHPFSVEEQIISIYAGTKKYLINIPVERIKEFEEKMLSEIKQNQKDILESIKSEKRITEENEQKLKTFLENFVKDFVKID</sequence>
<organism>
    <name type="scientific">Rickettsia bellii (strain OSU 85-389)</name>
    <dbReference type="NCBI Taxonomy" id="391896"/>
    <lineage>
        <taxon>Bacteria</taxon>
        <taxon>Pseudomonadati</taxon>
        <taxon>Pseudomonadota</taxon>
        <taxon>Alphaproteobacteria</taxon>
        <taxon>Rickettsiales</taxon>
        <taxon>Rickettsiaceae</taxon>
        <taxon>Rickettsieae</taxon>
        <taxon>Rickettsia</taxon>
        <taxon>belli group</taxon>
    </lineage>
</organism>
<evidence type="ECO:0000255" key="1">
    <source>
        <dbReference type="HAMAP-Rule" id="MF_01346"/>
    </source>
</evidence>
<protein>
    <recommendedName>
        <fullName evidence="1">ATP synthase subunit alpha</fullName>
        <ecNumber evidence="1">7.1.2.2</ecNumber>
    </recommendedName>
    <alternativeName>
        <fullName evidence="1">ATP synthase F1 sector subunit alpha</fullName>
    </alternativeName>
    <alternativeName>
        <fullName evidence="1">F-ATPase subunit alpha</fullName>
    </alternativeName>
</protein>